<sequence length="677" mass="76271">MTQVAKKILVTCALPYANGSIHLGHMLEHIQADVWVRYQRMRGHEVNFICADDAHGTPIMLKAQQLGITPEQMIGEMSQEHQTDFAGFNISYDNYHSTHSEENRQLSELIYSRLKENGFIKNRTISQLYDPEKGMFLPDRFVKGTCPKCKSPDQYGDNCEVCGATYSPTELIEPKSVVSGATPVMRDSEHFFFDLPSFSEMLQAWTRSGALQEQVANKMQEWFESGLQQWDISRDAPYFGFEIPNAPGKYFYVWLDAPIGYMGSFKNLCDKRSDSVSFDEYWKKDSTAELYHFIGKDIVYFHSLFWPAMLEGSNFRKPTNLFVHGYVTVNGAKMSKSRGTFIKASTWLNHFDADSLRYYYTAKLSSRIDDIDLNLEDFVQRVNADIVNKVVNLASRNAGFINKRFDGVLASELADPQLYKTFTDAAEVIGEAWESREFGKAVREIMALADLANRYVDEQAPWVVAKQEGRDADLQAICSMGINLFRVLMTYLKPVLPKLTERAEAFLNTELTWDGIQQPLLGHKVNPFKALYNRIDMKQVEALVEASKEEVKAAAAPVTGPLADDPIQETITFDDFAKVDLRVALIENAEFVEGSDKLLRLTLDLGGEKRNVFSGIRSAYPDPQALIGRHTIMVANLAPRKMRFGISEGMVMAAGPGGKDIFLLSPDAGAKPGHQVK</sequence>
<evidence type="ECO:0000255" key="1">
    <source>
        <dbReference type="HAMAP-Rule" id="MF_00098"/>
    </source>
</evidence>
<reference key="1">
    <citation type="journal article" date="2005" name="Nucleic Acids Res.">
        <title>Genome dynamics and diversity of Shigella species, the etiologic agents of bacillary dysentery.</title>
        <authorList>
            <person name="Yang F."/>
            <person name="Yang J."/>
            <person name="Zhang X."/>
            <person name="Chen L."/>
            <person name="Jiang Y."/>
            <person name="Yan Y."/>
            <person name="Tang X."/>
            <person name="Wang J."/>
            <person name="Xiong Z."/>
            <person name="Dong J."/>
            <person name="Xue Y."/>
            <person name="Zhu Y."/>
            <person name="Xu X."/>
            <person name="Sun L."/>
            <person name="Chen S."/>
            <person name="Nie H."/>
            <person name="Peng J."/>
            <person name="Xu J."/>
            <person name="Wang Y."/>
            <person name="Yuan Z."/>
            <person name="Wen Y."/>
            <person name="Yao Z."/>
            <person name="Shen Y."/>
            <person name="Qiang B."/>
            <person name="Hou Y."/>
            <person name="Yu J."/>
            <person name="Jin Q."/>
        </authorList>
    </citation>
    <scope>NUCLEOTIDE SEQUENCE [LARGE SCALE GENOMIC DNA]</scope>
    <source>
        <strain>Ss046</strain>
    </source>
</reference>
<dbReference type="EC" id="6.1.1.10" evidence="1"/>
<dbReference type="EMBL" id="CP000038">
    <property type="protein sequence ID" value="AAZ88816.1"/>
    <property type="molecule type" value="Genomic_DNA"/>
</dbReference>
<dbReference type="RefSeq" id="WP_005136810.1">
    <property type="nucleotide sequence ID" value="NC_007384.1"/>
</dbReference>
<dbReference type="SMR" id="Q3Z096"/>
<dbReference type="GeneID" id="93775078"/>
<dbReference type="KEGG" id="ssn:SSON_2163"/>
<dbReference type="HOGENOM" id="CLU_009710_7_0_6"/>
<dbReference type="Proteomes" id="UP000002529">
    <property type="component" value="Chromosome"/>
</dbReference>
<dbReference type="GO" id="GO:0005829">
    <property type="term" value="C:cytosol"/>
    <property type="evidence" value="ECO:0007669"/>
    <property type="project" value="TreeGrafter"/>
</dbReference>
<dbReference type="GO" id="GO:0005524">
    <property type="term" value="F:ATP binding"/>
    <property type="evidence" value="ECO:0007669"/>
    <property type="project" value="UniProtKB-UniRule"/>
</dbReference>
<dbReference type="GO" id="GO:0046872">
    <property type="term" value="F:metal ion binding"/>
    <property type="evidence" value="ECO:0007669"/>
    <property type="project" value="UniProtKB-KW"/>
</dbReference>
<dbReference type="GO" id="GO:0004825">
    <property type="term" value="F:methionine-tRNA ligase activity"/>
    <property type="evidence" value="ECO:0007669"/>
    <property type="project" value="UniProtKB-UniRule"/>
</dbReference>
<dbReference type="GO" id="GO:0000049">
    <property type="term" value="F:tRNA binding"/>
    <property type="evidence" value="ECO:0007669"/>
    <property type="project" value="UniProtKB-KW"/>
</dbReference>
<dbReference type="GO" id="GO:0006431">
    <property type="term" value="P:methionyl-tRNA aminoacylation"/>
    <property type="evidence" value="ECO:0007669"/>
    <property type="project" value="UniProtKB-UniRule"/>
</dbReference>
<dbReference type="CDD" id="cd07957">
    <property type="entry name" value="Anticodon_Ia_Met"/>
    <property type="match status" value="1"/>
</dbReference>
<dbReference type="CDD" id="cd00814">
    <property type="entry name" value="MetRS_core"/>
    <property type="match status" value="1"/>
</dbReference>
<dbReference type="CDD" id="cd02800">
    <property type="entry name" value="tRNA_bind_EcMetRS_like"/>
    <property type="match status" value="1"/>
</dbReference>
<dbReference type="FunFam" id="1.10.730.10:FF:000005">
    <property type="entry name" value="Methionine--tRNA ligase"/>
    <property type="match status" value="1"/>
</dbReference>
<dbReference type="FunFam" id="2.20.28.20:FF:000001">
    <property type="entry name" value="Methionine--tRNA ligase"/>
    <property type="match status" value="1"/>
</dbReference>
<dbReference type="FunFam" id="2.40.50.140:FF:000042">
    <property type="entry name" value="Methionine--tRNA ligase"/>
    <property type="match status" value="1"/>
</dbReference>
<dbReference type="Gene3D" id="3.40.50.620">
    <property type="entry name" value="HUPs"/>
    <property type="match status" value="1"/>
</dbReference>
<dbReference type="Gene3D" id="1.10.730.10">
    <property type="entry name" value="Isoleucyl-tRNA Synthetase, Domain 1"/>
    <property type="match status" value="1"/>
</dbReference>
<dbReference type="Gene3D" id="2.20.28.20">
    <property type="entry name" value="Methionyl-tRNA synthetase, Zn-domain"/>
    <property type="match status" value="1"/>
</dbReference>
<dbReference type="Gene3D" id="2.40.50.140">
    <property type="entry name" value="Nucleic acid-binding proteins"/>
    <property type="match status" value="1"/>
</dbReference>
<dbReference type="HAMAP" id="MF_00098">
    <property type="entry name" value="Met_tRNA_synth_type1"/>
    <property type="match status" value="1"/>
</dbReference>
<dbReference type="InterPro" id="IPR001412">
    <property type="entry name" value="aa-tRNA-synth_I_CS"/>
</dbReference>
<dbReference type="InterPro" id="IPR041872">
    <property type="entry name" value="Anticodon_Met"/>
</dbReference>
<dbReference type="InterPro" id="IPR004495">
    <property type="entry name" value="Met-tRNA-synth_bsu_C"/>
</dbReference>
<dbReference type="InterPro" id="IPR023458">
    <property type="entry name" value="Met-tRNA_ligase_1"/>
</dbReference>
<dbReference type="InterPro" id="IPR014758">
    <property type="entry name" value="Met-tRNA_synth"/>
</dbReference>
<dbReference type="InterPro" id="IPR015413">
    <property type="entry name" value="Methionyl/Leucyl_tRNA_Synth"/>
</dbReference>
<dbReference type="InterPro" id="IPR033911">
    <property type="entry name" value="MetRS_core"/>
</dbReference>
<dbReference type="InterPro" id="IPR029038">
    <property type="entry name" value="MetRS_Zn"/>
</dbReference>
<dbReference type="InterPro" id="IPR012340">
    <property type="entry name" value="NA-bd_OB-fold"/>
</dbReference>
<dbReference type="InterPro" id="IPR014729">
    <property type="entry name" value="Rossmann-like_a/b/a_fold"/>
</dbReference>
<dbReference type="InterPro" id="IPR002547">
    <property type="entry name" value="tRNA-bd_dom"/>
</dbReference>
<dbReference type="InterPro" id="IPR009080">
    <property type="entry name" value="tRNAsynth_Ia_anticodon-bd"/>
</dbReference>
<dbReference type="NCBIfam" id="TIGR00398">
    <property type="entry name" value="metG"/>
    <property type="match status" value="1"/>
</dbReference>
<dbReference type="NCBIfam" id="TIGR00399">
    <property type="entry name" value="metG_C_term"/>
    <property type="match status" value="1"/>
</dbReference>
<dbReference type="NCBIfam" id="NF001100">
    <property type="entry name" value="PRK00133.1"/>
    <property type="match status" value="1"/>
</dbReference>
<dbReference type="PANTHER" id="PTHR45765">
    <property type="entry name" value="METHIONINE--TRNA LIGASE"/>
    <property type="match status" value="1"/>
</dbReference>
<dbReference type="PANTHER" id="PTHR45765:SF1">
    <property type="entry name" value="METHIONINE--TRNA LIGASE, CYTOPLASMIC"/>
    <property type="match status" value="1"/>
</dbReference>
<dbReference type="Pfam" id="PF19303">
    <property type="entry name" value="Anticodon_3"/>
    <property type="match status" value="1"/>
</dbReference>
<dbReference type="Pfam" id="PF09334">
    <property type="entry name" value="tRNA-synt_1g"/>
    <property type="match status" value="1"/>
</dbReference>
<dbReference type="Pfam" id="PF01588">
    <property type="entry name" value="tRNA_bind"/>
    <property type="match status" value="1"/>
</dbReference>
<dbReference type="PRINTS" id="PR01041">
    <property type="entry name" value="TRNASYNTHMET"/>
</dbReference>
<dbReference type="SUPFAM" id="SSF47323">
    <property type="entry name" value="Anticodon-binding domain of a subclass of class I aminoacyl-tRNA synthetases"/>
    <property type="match status" value="1"/>
</dbReference>
<dbReference type="SUPFAM" id="SSF57770">
    <property type="entry name" value="Methionyl-tRNA synthetase (MetRS), Zn-domain"/>
    <property type="match status" value="1"/>
</dbReference>
<dbReference type="SUPFAM" id="SSF50249">
    <property type="entry name" value="Nucleic acid-binding proteins"/>
    <property type="match status" value="1"/>
</dbReference>
<dbReference type="SUPFAM" id="SSF52374">
    <property type="entry name" value="Nucleotidylyl transferase"/>
    <property type="match status" value="1"/>
</dbReference>
<dbReference type="PROSITE" id="PS00178">
    <property type="entry name" value="AA_TRNA_LIGASE_I"/>
    <property type="match status" value="1"/>
</dbReference>
<dbReference type="PROSITE" id="PS50886">
    <property type="entry name" value="TRBD"/>
    <property type="match status" value="1"/>
</dbReference>
<keyword id="KW-0030">Aminoacyl-tRNA synthetase</keyword>
<keyword id="KW-0067">ATP-binding</keyword>
<keyword id="KW-0963">Cytoplasm</keyword>
<keyword id="KW-0436">Ligase</keyword>
<keyword id="KW-0479">Metal-binding</keyword>
<keyword id="KW-0547">Nucleotide-binding</keyword>
<keyword id="KW-0648">Protein biosynthesis</keyword>
<keyword id="KW-1185">Reference proteome</keyword>
<keyword id="KW-0694">RNA-binding</keyword>
<keyword id="KW-0820">tRNA-binding</keyword>
<keyword id="KW-0862">Zinc</keyword>
<feature type="chain" id="PRO_0000331916" description="Methionine--tRNA ligase">
    <location>
        <begin position="1"/>
        <end position="677"/>
    </location>
</feature>
<feature type="domain" description="tRNA-binding" evidence="1">
    <location>
        <begin position="575"/>
        <end position="677"/>
    </location>
</feature>
<feature type="short sequence motif" description="'HIGH' region">
    <location>
        <begin position="15"/>
        <end position="25"/>
    </location>
</feature>
<feature type="short sequence motif" description="'KMSKS' region">
    <location>
        <begin position="333"/>
        <end position="337"/>
    </location>
</feature>
<feature type="binding site" evidence="1">
    <location>
        <position position="146"/>
    </location>
    <ligand>
        <name>Zn(2+)</name>
        <dbReference type="ChEBI" id="CHEBI:29105"/>
    </ligand>
</feature>
<feature type="binding site" evidence="1">
    <location>
        <position position="149"/>
    </location>
    <ligand>
        <name>Zn(2+)</name>
        <dbReference type="ChEBI" id="CHEBI:29105"/>
    </ligand>
</feature>
<feature type="binding site" evidence="1">
    <location>
        <position position="159"/>
    </location>
    <ligand>
        <name>Zn(2+)</name>
        <dbReference type="ChEBI" id="CHEBI:29105"/>
    </ligand>
</feature>
<feature type="binding site" evidence="1">
    <location>
        <position position="162"/>
    </location>
    <ligand>
        <name>Zn(2+)</name>
        <dbReference type="ChEBI" id="CHEBI:29105"/>
    </ligand>
</feature>
<feature type="binding site" evidence="1">
    <location>
        <position position="336"/>
    </location>
    <ligand>
        <name>ATP</name>
        <dbReference type="ChEBI" id="CHEBI:30616"/>
    </ligand>
</feature>
<comment type="function">
    <text evidence="1">Is required not only for elongation of protein synthesis but also for the initiation of all mRNA translation through initiator tRNA(fMet) aminoacylation.</text>
</comment>
<comment type="catalytic activity">
    <reaction evidence="1">
        <text>tRNA(Met) + L-methionine + ATP = L-methionyl-tRNA(Met) + AMP + diphosphate</text>
        <dbReference type="Rhea" id="RHEA:13481"/>
        <dbReference type="Rhea" id="RHEA-COMP:9667"/>
        <dbReference type="Rhea" id="RHEA-COMP:9698"/>
        <dbReference type="ChEBI" id="CHEBI:30616"/>
        <dbReference type="ChEBI" id="CHEBI:33019"/>
        <dbReference type="ChEBI" id="CHEBI:57844"/>
        <dbReference type="ChEBI" id="CHEBI:78442"/>
        <dbReference type="ChEBI" id="CHEBI:78530"/>
        <dbReference type="ChEBI" id="CHEBI:456215"/>
        <dbReference type="EC" id="6.1.1.10"/>
    </reaction>
</comment>
<comment type="cofactor">
    <cofactor evidence="1">
        <name>Zn(2+)</name>
        <dbReference type="ChEBI" id="CHEBI:29105"/>
    </cofactor>
    <text evidence="1">Binds 1 zinc ion per subunit.</text>
</comment>
<comment type="subunit">
    <text evidence="1">Homodimer.</text>
</comment>
<comment type="subcellular location">
    <subcellularLocation>
        <location evidence="1">Cytoplasm</location>
    </subcellularLocation>
</comment>
<comment type="similarity">
    <text evidence="1">Belongs to the class-I aminoacyl-tRNA synthetase family. MetG type 1 subfamily.</text>
</comment>
<proteinExistence type="inferred from homology"/>
<name>SYM_SHISS</name>
<gene>
    <name evidence="1" type="primary">metG</name>
    <name type="ordered locus">SSON_2163</name>
</gene>
<protein>
    <recommendedName>
        <fullName evidence="1">Methionine--tRNA ligase</fullName>
        <ecNumber evidence="1">6.1.1.10</ecNumber>
    </recommendedName>
    <alternativeName>
        <fullName evidence="1">Methionyl-tRNA synthetase</fullName>
        <shortName evidence="1">MetRS</shortName>
    </alternativeName>
</protein>
<accession>Q3Z096</accession>
<organism>
    <name type="scientific">Shigella sonnei (strain Ss046)</name>
    <dbReference type="NCBI Taxonomy" id="300269"/>
    <lineage>
        <taxon>Bacteria</taxon>
        <taxon>Pseudomonadati</taxon>
        <taxon>Pseudomonadota</taxon>
        <taxon>Gammaproteobacteria</taxon>
        <taxon>Enterobacterales</taxon>
        <taxon>Enterobacteriaceae</taxon>
        <taxon>Shigella</taxon>
    </lineage>
</organism>